<reference key="1">
    <citation type="submission" date="2007-07" db="EMBL/GenBank/DDBJ databases">
        <authorList>
            <consortium name="NIH - Mammalian Gene Collection (MGC) project"/>
        </authorList>
    </citation>
    <scope>NUCLEOTIDE SEQUENCE [LARGE SCALE MRNA]</scope>
    <source>
        <strain>Hereford</strain>
        <tissue>Hypothalamus</tissue>
    </source>
</reference>
<comment type="subcellular location">
    <subcellularLocation>
        <location evidence="2">Membrane</location>
        <topology evidence="2">Multi-pass membrane protein</topology>
    </subcellularLocation>
</comment>
<comment type="similarity">
    <text evidence="2">Belongs to the TMEM144 family.</text>
</comment>
<dbReference type="EMBL" id="BC149997">
    <property type="protein sequence ID" value="AAI49998.1"/>
    <property type="molecule type" value="mRNA"/>
</dbReference>
<dbReference type="RefSeq" id="NP_001095459.1">
    <property type="nucleotide sequence ID" value="NM_001101989.1"/>
</dbReference>
<dbReference type="FunCoup" id="A6QQU6">
    <property type="interactions" value="12"/>
</dbReference>
<dbReference type="STRING" id="9913.ENSBTAP00000025604"/>
<dbReference type="PaxDb" id="9913-ENSBTAP00000025604"/>
<dbReference type="GeneID" id="514175"/>
<dbReference type="KEGG" id="bta:514175"/>
<dbReference type="CTD" id="55314"/>
<dbReference type="eggNOG" id="ENOG502QR0F">
    <property type="taxonomic scope" value="Eukaryota"/>
</dbReference>
<dbReference type="InParanoid" id="A6QQU6"/>
<dbReference type="OrthoDB" id="426527at2759"/>
<dbReference type="Proteomes" id="UP000009136">
    <property type="component" value="Unplaced"/>
</dbReference>
<dbReference type="GO" id="GO:0016020">
    <property type="term" value="C:membrane"/>
    <property type="evidence" value="ECO:0007669"/>
    <property type="project" value="UniProtKB-SubCell"/>
</dbReference>
<dbReference type="GO" id="GO:0015144">
    <property type="term" value="F:carbohydrate transmembrane transporter activity"/>
    <property type="evidence" value="ECO:0007669"/>
    <property type="project" value="InterPro"/>
</dbReference>
<dbReference type="InterPro" id="IPR010651">
    <property type="entry name" value="Sugar_transport"/>
</dbReference>
<dbReference type="InterPro" id="IPR012435">
    <property type="entry name" value="TMEM144"/>
</dbReference>
<dbReference type="PANTHER" id="PTHR16119">
    <property type="entry name" value="TRANSMEMBRANE PROTEIN 144"/>
    <property type="match status" value="1"/>
</dbReference>
<dbReference type="PANTHER" id="PTHR16119:SF17">
    <property type="entry name" value="TRANSMEMBRANE PROTEIN 144"/>
    <property type="match status" value="1"/>
</dbReference>
<dbReference type="Pfam" id="PF07857">
    <property type="entry name" value="TMEM144"/>
    <property type="match status" value="1"/>
</dbReference>
<dbReference type="SUPFAM" id="SSF103481">
    <property type="entry name" value="Multidrug resistance efflux transporter EmrE"/>
    <property type="match status" value="1"/>
</dbReference>
<keyword id="KW-0472">Membrane</keyword>
<keyword id="KW-1185">Reference proteome</keyword>
<keyword id="KW-0812">Transmembrane</keyword>
<keyword id="KW-1133">Transmembrane helix</keyword>
<accession>A6QQU6</accession>
<sequence length="348" mass="37871">MSSNATDLTTGFIASIVAIVLFGSNFVPLKKYETGDGMFLQWVLCAAIWLVALVVNLILHCPKFWPFAMVGGCIWATGNIAVVPIIKTIGLGLGILIWGSFNALTGWASSRFGWFGMDAEEVAKPVLNYIGAGLSVVSAFIFLFIKSEIPNNTYSVDTTPLISEHVINKTQDPDPDCSWVDKLSTAQSHLVGCSLAVISGILYGSTFVPIIYIKDHSKRNDSIYAGASQNDLDYIFAHFSGIFLTSTVYFLAYCVAMKNNPKLHPEAVLPGFLSGVLWAIATCCWFIANRSLSAVVSFPIITAGPGFIATMWGVFMFKEIQGRKNYLLMMLAFCIILTGALCTAFSKI</sequence>
<gene>
    <name type="primary">TMEM144</name>
</gene>
<evidence type="ECO:0000255" key="1"/>
<evidence type="ECO:0000305" key="2"/>
<feature type="chain" id="PRO_0000328444" description="Transmembrane protein 144">
    <location>
        <begin position="1"/>
        <end position="348"/>
    </location>
</feature>
<feature type="transmembrane region" description="Helical" evidence="1">
    <location>
        <begin position="8"/>
        <end position="28"/>
    </location>
</feature>
<feature type="transmembrane region" description="Helical" evidence="1">
    <location>
        <begin position="39"/>
        <end position="59"/>
    </location>
</feature>
<feature type="transmembrane region" description="Helical" evidence="1">
    <location>
        <begin position="64"/>
        <end position="86"/>
    </location>
</feature>
<feature type="transmembrane region" description="Helical" evidence="1">
    <location>
        <begin position="93"/>
        <end position="115"/>
    </location>
</feature>
<feature type="transmembrane region" description="Helical" evidence="1">
    <location>
        <begin position="125"/>
        <end position="145"/>
    </location>
</feature>
<feature type="transmembrane region" description="Helical" evidence="1">
    <location>
        <begin position="193"/>
        <end position="213"/>
    </location>
</feature>
<feature type="transmembrane region" description="Helical" evidence="1">
    <location>
        <begin position="235"/>
        <end position="255"/>
    </location>
</feature>
<feature type="transmembrane region" description="Helical" evidence="1">
    <location>
        <begin position="267"/>
        <end position="287"/>
    </location>
</feature>
<feature type="transmembrane region" description="Helical" evidence="1">
    <location>
        <begin position="295"/>
        <end position="315"/>
    </location>
</feature>
<feature type="transmembrane region" description="Helical" evidence="1">
    <location>
        <begin position="326"/>
        <end position="346"/>
    </location>
</feature>
<name>TM144_BOVIN</name>
<organism>
    <name type="scientific">Bos taurus</name>
    <name type="common">Bovine</name>
    <dbReference type="NCBI Taxonomy" id="9913"/>
    <lineage>
        <taxon>Eukaryota</taxon>
        <taxon>Metazoa</taxon>
        <taxon>Chordata</taxon>
        <taxon>Craniata</taxon>
        <taxon>Vertebrata</taxon>
        <taxon>Euteleostomi</taxon>
        <taxon>Mammalia</taxon>
        <taxon>Eutheria</taxon>
        <taxon>Laurasiatheria</taxon>
        <taxon>Artiodactyla</taxon>
        <taxon>Ruminantia</taxon>
        <taxon>Pecora</taxon>
        <taxon>Bovidae</taxon>
        <taxon>Bovinae</taxon>
        <taxon>Bos</taxon>
    </lineage>
</organism>
<protein>
    <recommendedName>
        <fullName>Transmembrane protein 144</fullName>
    </recommendedName>
</protein>
<proteinExistence type="evidence at transcript level"/>